<organism>
    <name type="scientific">Rattus norvegicus</name>
    <name type="common">Rat</name>
    <dbReference type="NCBI Taxonomy" id="10116"/>
    <lineage>
        <taxon>Eukaryota</taxon>
        <taxon>Metazoa</taxon>
        <taxon>Chordata</taxon>
        <taxon>Craniata</taxon>
        <taxon>Vertebrata</taxon>
        <taxon>Euteleostomi</taxon>
        <taxon>Mammalia</taxon>
        <taxon>Eutheria</taxon>
        <taxon>Euarchontoglires</taxon>
        <taxon>Glires</taxon>
        <taxon>Rodentia</taxon>
        <taxon>Myomorpha</taxon>
        <taxon>Muroidea</taxon>
        <taxon>Muridae</taxon>
        <taxon>Murinae</taxon>
        <taxon>Rattus</taxon>
    </lineage>
</organism>
<feature type="chain" id="PRO_0000054263" description="High affinity cationic amino acid transporter 1">
    <location>
        <begin position="1"/>
        <end position="624"/>
    </location>
</feature>
<feature type="topological domain" description="Cytoplasmic" evidence="3">
    <location>
        <begin position="1"/>
        <end position="35"/>
    </location>
</feature>
<feature type="transmembrane region" description="Helical" evidence="3">
    <location>
        <begin position="36"/>
        <end position="57"/>
    </location>
</feature>
<feature type="topological domain" description="Extracellular" evidence="3">
    <location>
        <begin position="58"/>
        <end position="61"/>
    </location>
</feature>
<feature type="transmembrane region" description="Helical" evidence="3">
    <location>
        <begin position="62"/>
        <end position="82"/>
    </location>
</feature>
<feature type="topological domain" description="Cytoplasmic" evidence="3">
    <location>
        <begin position="83"/>
        <end position="102"/>
    </location>
</feature>
<feature type="transmembrane region" description="Helical" evidence="3">
    <location>
        <begin position="103"/>
        <end position="123"/>
    </location>
</feature>
<feature type="topological domain" description="Extracellular" evidence="3">
    <location>
        <begin position="124"/>
        <end position="162"/>
    </location>
</feature>
<feature type="transmembrane region" description="Helical" evidence="3">
    <location>
        <begin position="163"/>
        <end position="183"/>
    </location>
</feature>
<feature type="topological domain" description="Cytoplasmic" evidence="3">
    <location>
        <begin position="184"/>
        <end position="191"/>
    </location>
</feature>
<feature type="transmembrane region" description="Helical" evidence="3">
    <location>
        <begin position="192"/>
        <end position="212"/>
    </location>
</feature>
<feature type="topological domain" description="Extracellular" evidence="3">
    <location>
        <begin position="213"/>
        <end position="241"/>
    </location>
</feature>
<feature type="transmembrane region" description="Helical" evidence="3">
    <location>
        <begin position="242"/>
        <end position="262"/>
    </location>
</feature>
<feature type="topological domain" description="Cytoplasmic" evidence="3">
    <location>
        <begin position="263"/>
        <end position="282"/>
    </location>
</feature>
<feature type="transmembrane region" description="Helical" evidence="3">
    <location>
        <begin position="283"/>
        <end position="302"/>
    </location>
</feature>
<feature type="topological domain" description="Extracellular" evidence="3">
    <location>
        <begin position="303"/>
        <end position="332"/>
    </location>
</feature>
<feature type="transmembrane region" description="Helical" evidence="3">
    <location>
        <begin position="333"/>
        <end position="353"/>
    </location>
</feature>
<feature type="topological domain" description="Cytoplasmic" evidence="3">
    <location>
        <begin position="354"/>
        <end position="379"/>
    </location>
</feature>
<feature type="transmembrane region" description="Helical" evidence="3">
    <location>
        <begin position="380"/>
        <end position="400"/>
    </location>
</feature>
<feature type="topological domain" description="Extracellular" evidence="3">
    <location>
        <begin position="401"/>
        <end position="403"/>
    </location>
</feature>
<feature type="transmembrane region" description="Helical" evidence="3">
    <location>
        <begin position="404"/>
        <end position="424"/>
    </location>
</feature>
<feature type="topological domain" description="Cytoplasmic" evidence="3">
    <location>
        <begin position="425"/>
        <end position="487"/>
    </location>
</feature>
<feature type="transmembrane region" description="Helical" evidence="3">
    <location>
        <begin position="488"/>
        <end position="508"/>
    </location>
</feature>
<feature type="topological domain" description="Extracellular" evidence="3">
    <location>
        <begin position="509"/>
        <end position="521"/>
    </location>
</feature>
<feature type="transmembrane region" description="Helical" evidence="3">
    <location>
        <begin position="522"/>
        <end position="546"/>
    </location>
</feature>
<feature type="topological domain" description="Cytoplasmic" evidence="3">
    <location>
        <begin position="547"/>
        <end position="554"/>
    </location>
</feature>
<feature type="transmembrane region" description="Helical" evidence="3">
    <location>
        <begin position="555"/>
        <end position="575"/>
    </location>
</feature>
<feature type="topological domain" description="Extracellular" evidence="3">
    <location>
        <begin position="576"/>
        <end position="579"/>
    </location>
</feature>
<feature type="transmembrane region" description="Helical" evidence="3">
    <location>
        <begin position="580"/>
        <end position="600"/>
    </location>
</feature>
<feature type="topological domain" description="Cytoplasmic" evidence="3">
    <location>
        <begin position="601"/>
        <end position="624"/>
    </location>
</feature>
<feature type="modified residue" description="Phosphoserine" evidence="2">
    <location>
        <position position="618"/>
    </location>
</feature>
<feature type="glycosylation site" description="N-linked (GlcNAc...) asparagine" evidence="3">
    <location>
        <position position="222"/>
    </location>
</feature>
<feature type="glycosylation site" description="N-linked (GlcNAc...) asparagine" evidence="3">
    <location>
        <position position="231"/>
    </location>
</feature>
<feature type="sequence conflict" description="In Ref. 2; L10152." evidence="6" ref="2">
    <original>F</original>
    <variation>L</variation>
    <location>
        <position position="111"/>
    </location>
</feature>
<comment type="function">
    <text evidence="2">High-affinity, low capacity permease involved in the transport of the cationic amino acids (arginine, lysine and ornithine) in non-hepatic tissues.</text>
</comment>
<comment type="function">
    <text evidence="4">(Microbial infection) Acts as a receptor for the ecotropic murine retroviral leukemia virus.</text>
</comment>
<comment type="catalytic activity">
    <reaction evidence="2">
        <text>L-arginine(in) = L-arginine(out)</text>
        <dbReference type="Rhea" id="RHEA:32143"/>
        <dbReference type="ChEBI" id="CHEBI:32682"/>
    </reaction>
</comment>
<comment type="catalytic activity">
    <reaction evidence="2">
        <text>L-lysine(in) = L-lysine(out)</text>
        <dbReference type="Rhea" id="RHEA:70935"/>
        <dbReference type="ChEBI" id="CHEBI:32551"/>
    </reaction>
</comment>
<comment type="catalytic activity">
    <reaction evidence="2">
        <text>L-ornithine(in) = L-ornithine(out)</text>
        <dbReference type="Rhea" id="RHEA:71199"/>
        <dbReference type="ChEBI" id="CHEBI:46911"/>
    </reaction>
</comment>
<comment type="catalytic activity">
    <reaction evidence="2">
        <text>L-homoarginine(in) = L-homoarginine(out)</text>
        <dbReference type="Rhea" id="RHEA:71203"/>
        <dbReference type="ChEBI" id="CHEBI:143006"/>
    </reaction>
</comment>
<comment type="subunit">
    <text evidence="1 2">Interacts with TM4SF5; the interaction is negatively regulated by arginine (By similarity). Forms tissue-specific complexes with ASL, ASS1 and nitric oxide synthase NOS1 or NOS3; the complex regulates cell-autonomous L-arginine synthesis and citrulline recycling while channeling extracellular L-arginine to nitric oxide synthesis pathway (By similarity).</text>
</comment>
<comment type="subcellular location">
    <subcellularLocation>
        <location evidence="2">Cell membrane</location>
        <topology evidence="3">Multi-pass membrane protein</topology>
    </subcellularLocation>
</comment>
<comment type="similarity">
    <text evidence="6">Belongs to the amino acid-polyamine-organocation (APC) superfamily. Cationic amino acid transporter (CAT) (TC 2.A.3.3) family.</text>
</comment>
<keyword id="KW-0029">Amino-acid transport</keyword>
<keyword id="KW-1003">Cell membrane</keyword>
<keyword id="KW-0325">Glycoprotein</keyword>
<keyword id="KW-0472">Membrane</keyword>
<keyword id="KW-0597">Phosphoprotein</keyword>
<keyword id="KW-0675">Receptor</keyword>
<keyword id="KW-1185">Reference proteome</keyword>
<keyword id="KW-0812">Transmembrane</keyword>
<keyword id="KW-1133">Transmembrane helix</keyword>
<keyword id="KW-0813">Transport</keyword>
<reference key="1">
    <citation type="journal article" date="1999" name="J. Virol.">
        <title>Contribution of virus-receptor interaction to distinct viral proliferation of neuropathogenic and nonneuropathogenic murine leukemia viruses in rat glial cells.</title>
        <authorList>
            <person name="Takase-Yoden S."/>
            <person name="Watanabe R."/>
        </authorList>
    </citation>
    <scope>NUCLEOTIDE SEQUENCE [MRNA]</scope>
    <scope>FUNCTION (MICROBIAL INFECTION)</scope>
</reference>
<reference key="2">
    <citation type="journal article" date="1993" name="J. Neurochem.">
        <title>Identification of the cationic amino acid transporter (system y+) of the rat blood-brain barrier.</title>
        <authorList>
            <person name="Stoll J."/>
            <person name="Wadhwani K.C."/>
            <person name="Smith Q.R."/>
        </authorList>
    </citation>
    <scope>NUCLEOTIDE SEQUENCE [MRNA] OF 1-288</scope>
    <source>
        <strain>Sprague-Dawley</strain>
        <tissue>Brain</tissue>
    </source>
</reference>
<accession>P30823</accession>
<dbReference type="EMBL" id="D67087">
    <property type="protein sequence ID" value="BAA11090.1"/>
    <property type="molecule type" value="mRNA"/>
</dbReference>
<dbReference type="EMBL" id="L10152">
    <property type="status" value="NOT_ANNOTATED_CDS"/>
    <property type="molecule type" value="mRNA"/>
</dbReference>
<dbReference type="SMR" id="P30823"/>
<dbReference type="FunCoup" id="P30823">
    <property type="interactions" value="269"/>
</dbReference>
<dbReference type="STRING" id="10116.ENSRNOP00000072647"/>
<dbReference type="GlyCosmos" id="P30823">
    <property type="glycosylation" value="2 sites, No reported glycans"/>
</dbReference>
<dbReference type="GlyGen" id="P30823">
    <property type="glycosylation" value="3 sites"/>
</dbReference>
<dbReference type="PhosphoSitePlus" id="P30823"/>
<dbReference type="SwissPalm" id="P30823"/>
<dbReference type="jPOST" id="P30823"/>
<dbReference type="PaxDb" id="10116-ENSRNOP00000001234"/>
<dbReference type="UCSC" id="RGD:3716">
    <property type="organism name" value="rat"/>
</dbReference>
<dbReference type="AGR" id="RGD:3716"/>
<dbReference type="RGD" id="3716">
    <property type="gene designation" value="Slc7a1"/>
</dbReference>
<dbReference type="eggNOG" id="KOG1286">
    <property type="taxonomic scope" value="Eukaryota"/>
</dbReference>
<dbReference type="InParanoid" id="P30823"/>
<dbReference type="PhylomeDB" id="P30823"/>
<dbReference type="Reactome" id="R-RNO-352230">
    <property type="pathway name" value="Amino acid transport across the plasma membrane"/>
</dbReference>
<dbReference type="PRO" id="PR:P30823"/>
<dbReference type="Proteomes" id="UP000002494">
    <property type="component" value="Unplaced"/>
</dbReference>
<dbReference type="GO" id="GO:0016324">
    <property type="term" value="C:apical plasma membrane"/>
    <property type="evidence" value="ECO:0000314"/>
    <property type="project" value="ARUK-UCL"/>
</dbReference>
<dbReference type="GO" id="GO:0009925">
    <property type="term" value="C:basal plasma membrane"/>
    <property type="evidence" value="ECO:0000314"/>
    <property type="project" value="ARUK-UCL"/>
</dbReference>
<dbReference type="GO" id="GO:0016323">
    <property type="term" value="C:basolateral plasma membrane"/>
    <property type="evidence" value="ECO:0000266"/>
    <property type="project" value="RGD"/>
</dbReference>
<dbReference type="GO" id="GO:0005886">
    <property type="term" value="C:plasma membrane"/>
    <property type="evidence" value="ECO:0000266"/>
    <property type="project" value="RGD"/>
</dbReference>
<dbReference type="GO" id="GO:0032991">
    <property type="term" value="C:protein-containing complex"/>
    <property type="evidence" value="ECO:0000266"/>
    <property type="project" value="RGD"/>
</dbReference>
<dbReference type="GO" id="GO:0015171">
    <property type="term" value="F:amino acid transmembrane transporter activity"/>
    <property type="evidence" value="ECO:0000266"/>
    <property type="project" value="RGD"/>
</dbReference>
<dbReference type="GO" id="GO:0015174">
    <property type="term" value="F:basic amino acid transmembrane transporter activity"/>
    <property type="evidence" value="ECO:0000266"/>
    <property type="project" value="RGD"/>
</dbReference>
<dbReference type="GO" id="GO:0061459">
    <property type="term" value="F:L-arginine transmembrane transporter activity"/>
    <property type="evidence" value="ECO:0000314"/>
    <property type="project" value="RGD"/>
</dbReference>
<dbReference type="GO" id="GO:0005290">
    <property type="term" value="F:L-histidine transmembrane transporter activity"/>
    <property type="evidence" value="ECO:0000266"/>
    <property type="project" value="RGD"/>
</dbReference>
<dbReference type="GO" id="GO:0015189">
    <property type="term" value="F:L-lysine transmembrane transporter activity"/>
    <property type="evidence" value="ECO:0000250"/>
    <property type="project" value="UniProtKB"/>
</dbReference>
<dbReference type="GO" id="GO:0000064">
    <property type="term" value="F:L-ornithine transmembrane transporter activity"/>
    <property type="evidence" value="ECO:0000250"/>
    <property type="project" value="UniProtKB"/>
</dbReference>
<dbReference type="GO" id="GO:0001618">
    <property type="term" value="F:virus receptor activity"/>
    <property type="evidence" value="ECO:0000266"/>
    <property type="project" value="RGD"/>
</dbReference>
<dbReference type="GO" id="GO:0089718">
    <property type="term" value="P:amino acid import across plasma membrane"/>
    <property type="evidence" value="ECO:0000266"/>
    <property type="project" value="RGD"/>
</dbReference>
<dbReference type="GO" id="GO:0015802">
    <property type="term" value="P:basic amino acid transport"/>
    <property type="evidence" value="ECO:0000304"/>
    <property type="project" value="RGD"/>
</dbReference>
<dbReference type="GO" id="GO:0015807">
    <property type="term" value="P:L-amino acid transport"/>
    <property type="evidence" value="ECO:0000266"/>
    <property type="project" value="RGD"/>
</dbReference>
<dbReference type="GO" id="GO:0097638">
    <property type="term" value="P:L-arginine import across plasma membrane"/>
    <property type="evidence" value="ECO:0000315"/>
    <property type="project" value="ARUK-UCL"/>
</dbReference>
<dbReference type="GO" id="GO:1903826">
    <property type="term" value="P:L-arginine transmembrane transport"/>
    <property type="evidence" value="ECO:0000315"/>
    <property type="project" value="RGD"/>
</dbReference>
<dbReference type="GO" id="GO:1903810">
    <property type="term" value="P:L-histidine import across plasma membrane"/>
    <property type="evidence" value="ECO:0000266"/>
    <property type="project" value="RGD"/>
</dbReference>
<dbReference type="GO" id="GO:1903352">
    <property type="term" value="P:L-ornithine transmembrane transport"/>
    <property type="evidence" value="ECO:0000250"/>
    <property type="project" value="UniProtKB"/>
</dbReference>
<dbReference type="GO" id="GO:0015819">
    <property type="term" value="P:lysine transport"/>
    <property type="evidence" value="ECO:0000266"/>
    <property type="project" value="RGD"/>
</dbReference>
<dbReference type="GO" id="GO:0015822">
    <property type="term" value="P:ornithine transport"/>
    <property type="evidence" value="ECO:0000266"/>
    <property type="project" value="RGD"/>
</dbReference>
<dbReference type="GO" id="GO:0042102">
    <property type="term" value="P:positive regulation of T cell proliferation"/>
    <property type="evidence" value="ECO:0000266"/>
    <property type="project" value="RGD"/>
</dbReference>
<dbReference type="GO" id="GO:0032006">
    <property type="term" value="P:regulation of TOR signaling"/>
    <property type="evidence" value="ECO:0000315"/>
    <property type="project" value="RGD"/>
</dbReference>
<dbReference type="FunFam" id="1.20.1740.10:FF:000024">
    <property type="entry name" value="High affinity cationic amino acid transporter 1"/>
    <property type="match status" value="1"/>
</dbReference>
<dbReference type="FunFam" id="1.20.1740.10:FF:000009">
    <property type="entry name" value="Low affinity cationic amino acid transporter 2"/>
    <property type="match status" value="1"/>
</dbReference>
<dbReference type="Gene3D" id="1.20.1740.10">
    <property type="entry name" value="Amino acid/polyamine transporter I"/>
    <property type="match status" value="2"/>
</dbReference>
<dbReference type="InterPro" id="IPR002293">
    <property type="entry name" value="AA/rel_permease1"/>
</dbReference>
<dbReference type="InterPro" id="IPR004755">
    <property type="entry name" value="Cat_AA_permease"/>
</dbReference>
<dbReference type="InterPro" id="IPR029485">
    <property type="entry name" value="CAT_C"/>
</dbReference>
<dbReference type="NCBIfam" id="TIGR00906">
    <property type="entry name" value="2A0303"/>
    <property type="match status" value="1"/>
</dbReference>
<dbReference type="PANTHER" id="PTHR43243:SF28">
    <property type="entry name" value="HIGH AFFINITY CATIONIC AMINO ACID TRANSPORTER 1"/>
    <property type="match status" value="1"/>
</dbReference>
<dbReference type="PANTHER" id="PTHR43243">
    <property type="entry name" value="INNER MEMBRANE TRANSPORTER YGJI-RELATED"/>
    <property type="match status" value="1"/>
</dbReference>
<dbReference type="Pfam" id="PF13520">
    <property type="entry name" value="AA_permease_2"/>
    <property type="match status" value="1"/>
</dbReference>
<dbReference type="Pfam" id="PF13906">
    <property type="entry name" value="AA_permease_C"/>
    <property type="match status" value="1"/>
</dbReference>
<dbReference type="PIRSF" id="PIRSF006060">
    <property type="entry name" value="AA_transporter"/>
    <property type="match status" value="1"/>
</dbReference>
<protein>
    <recommendedName>
        <fullName>High affinity cationic amino acid transporter 1</fullName>
        <shortName evidence="1">CAT-1</shortName>
        <shortName>CAT1</shortName>
    </recommendedName>
    <alternativeName>
        <fullName>Ecotropic retroviral leukemia receptor</fullName>
    </alternativeName>
    <alternativeName>
        <fullName evidence="5">Ecotropic retrovirus receptor</fullName>
        <shortName evidence="5">EcoR</shortName>
    </alternativeName>
    <alternativeName>
        <fullName evidence="7">Solute carrier family 7 member 1</fullName>
    </alternativeName>
    <alternativeName>
        <fullName>System Y+ basic amino acid transporter</fullName>
    </alternativeName>
</protein>
<sequence length="624" mass="67267">MGCKNLLSLGQQMLRRKVVDCSREESRLSRCLNTYDLVALGVGSTLGAGVYVLAGAVARENAGPAIVISFLIAALASVLAGLCYGEFGARVPKTGSAYLYSYVTVGELWAFITGWNLILSYIIGTSSVARAWSATFDELIGKPIGEFSRQHMALNAPGVLAQTPDIFAVIIIIILTGLLTLGVKESAMVNKIFTCINVLVLCFIMVSGFVKGSIENWQLTENKSSPLCGNNDTNVKYGEGGFMPFGFSGVLSGAATCFYAFVGFDCIATTGEEVKNPQKAIPVGIVASLLICFIAYFGVSAALTLMMPYFCLDTDSPLPGAFKYRGWEEAKYAVAVGSLCALSTSPLGSMFPMPRVIYAMAEDGLLFKFLAKINDRTKTPIIATVTSGAIAAVMAFLFELKDLVDLMSIGTLLAYSLVAACVLVLRYQPEQPNLVYQMARTTDELDQVDQNEMVSASESQTGFLPAAEKFSLKTILSPKNMEPSKFSGLIVNISAGLLAVLIITVCIVAVLGREALAEGTLWAVFVMTGSVLLCMLVTGIIWRQPESKTKLSFKVPFVPVLPVLSIFVNIYLMMQLDQGTWVRFAVWMLIAFAIYFGYGVWHSEEASLAAGQAKTPDSNLDQCK</sequence>
<gene>
    <name evidence="7" type="primary">Slc7a1</name>
    <name type="synonym">Atrc1</name>
</gene>
<evidence type="ECO:0000250" key="1">
    <source>
        <dbReference type="UniProtKB" id="P30825"/>
    </source>
</evidence>
<evidence type="ECO:0000250" key="2">
    <source>
        <dbReference type="UniProtKB" id="Q09143"/>
    </source>
</evidence>
<evidence type="ECO:0000255" key="3"/>
<evidence type="ECO:0000269" key="4">
    <source>
    </source>
</evidence>
<evidence type="ECO:0000303" key="5">
    <source>
    </source>
</evidence>
<evidence type="ECO:0000305" key="6"/>
<evidence type="ECO:0000312" key="7">
    <source>
        <dbReference type="RGD" id="3716"/>
    </source>
</evidence>
<proteinExistence type="evidence at transcript level"/>
<name>CTR1_RAT</name>